<gene>
    <name type="ordered locus">YJL027C</name>
    <name type="ORF">J1269</name>
</gene>
<sequence>MMVTRKHYRYIYLQNSHSLISCFVHFEFPRVWYGAICPCFPSFALLRKIFFCQQQQHATLCAVLRSGLCGNGDIVPMPARREVWVWGVCDLVAMAIARGCGLSPNGCPLLRISHSCRVNKKHERGRTALNSGRSRDVK</sequence>
<keyword id="KW-1185">Reference proteome</keyword>
<protein>
    <recommendedName>
        <fullName>Uncharacterized protein YJL027C</fullName>
    </recommendedName>
</protein>
<name>YJC7_YEAST</name>
<feature type="chain" id="PRO_0000203072" description="Uncharacterized protein YJL027C">
    <location>
        <begin position="1"/>
        <end position="138"/>
    </location>
</feature>
<reference key="1">
    <citation type="journal article" date="1996" name="EMBO J.">
        <title>Complete nucleotide sequence of Saccharomyces cerevisiae chromosome X.</title>
        <authorList>
            <person name="Galibert F."/>
            <person name="Alexandraki D."/>
            <person name="Baur A."/>
            <person name="Boles E."/>
            <person name="Chalwatzis N."/>
            <person name="Chuat J.-C."/>
            <person name="Coster F."/>
            <person name="Cziepluch C."/>
            <person name="de Haan M."/>
            <person name="Domdey H."/>
            <person name="Durand P."/>
            <person name="Entian K.-D."/>
            <person name="Gatius M."/>
            <person name="Goffeau A."/>
            <person name="Grivell L.A."/>
            <person name="Hennemann A."/>
            <person name="Herbert C.J."/>
            <person name="Heumann K."/>
            <person name="Hilger F."/>
            <person name="Hollenberg C.P."/>
            <person name="Huang M.-E."/>
            <person name="Jacq C."/>
            <person name="Jauniaux J.-C."/>
            <person name="Katsoulou C."/>
            <person name="Kirchrath L."/>
            <person name="Kleine K."/>
            <person name="Kordes E."/>
            <person name="Koetter P."/>
            <person name="Liebl S."/>
            <person name="Louis E.J."/>
            <person name="Manus V."/>
            <person name="Mewes H.-W."/>
            <person name="Miosga T."/>
            <person name="Obermaier B."/>
            <person name="Perea J."/>
            <person name="Pohl T.M."/>
            <person name="Portetelle D."/>
            <person name="Pujol A."/>
            <person name="Purnelle B."/>
            <person name="Ramezani Rad M."/>
            <person name="Rasmussen S.W."/>
            <person name="Rose M."/>
            <person name="Rossau R."/>
            <person name="Schaaff-Gerstenschlaeger I."/>
            <person name="Smits P.H.M."/>
            <person name="Scarcez T."/>
            <person name="Soriano N."/>
            <person name="To Van D."/>
            <person name="Tzermia M."/>
            <person name="Van Broekhoven A."/>
            <person name="Vandenbol M."/>
            <person name="Wedler H."/>
            <person name="von Wettstein D."/>
            <person name="Wambutt R."/>
            <person name="Zagulski M."/>
            <person name="Zollner A."/>
            <person name="Karpfinger-Hartl L."/>
        </authorList>
    </citation>
    <scope>NUCLEOTIDE SEQUENCE [LARGE SCALE GENOMIC DNA]</scope>
    <source>
        <strain>ATCC 204508 / S288c</strain>
    </source>
</reference>
<reference key="2">
    <citation type="journal article" date="2014" name="G3 (Bethesda)">
        <title>The reference genome sequence of Saccharomyces cerevisiae: Then and now.</title>
        <authorList>
            <person name="Engel S.R."/>
            <person name="Dietrich F.S."/>
            <person name="Fisk D.G."/>
            <person name="Binkley G."/>
            <person name="Balakrishnan R."/>
            <person name="Costanzo M.C."/>
            <person name="Dwight S.S."/>
            <person name="Hitz B.C."/>
            <person name="Karra K."/>
            <person name="Nash R.S."/>
            <person name="Weng S."/>
            <person name="Wong E.D."/>
            <person name="Lloyd P."/>
            <person name="Skrzypek M.S."/>
            <person name="Miyasato S.R."/>
            <person name="Simison M."/>
            <person name="Cherry J.M."/>
        </authorList>
    </citation>
    <scope>GENOME REANNOTATION</scope>
    <source>
        <strain>ATCC 204508 / S288c</strain>
    </source>
</reference>
<reference key="3">
    <citation type="journal article" date="2007" name="Genome Res.">
        <title>Approaching a complete repository of sequence-verified protein-encoding clones for Saccharomyces cerevisiae.</title>
        <authorList>
            <person name="Hu Y."/>
            <person name="Rolfs A."/>
            <person name="Bhullar B."/>
            <person name="Murthy T.V.S."/>
            <person name="Zhu C."/>
            <person name="Berger M.F."/>
            <person name="Camargo A.A."/>
            <person name="Kelley F."/>
            <person name="McCarron S."/>
            <person name="Jepson D."/>
            <person name="Richardson A."/>
            <person name="Raphael J."/>
            <person name="Moreira D."/>
            <person name="Taycher E."/>
            <person name="Zuo D."/>
            <person name="Mohr S."/>
            <person name="Kane M.F."/>
            <person name="Williamson J."/>
            <person name="Simpson A.J.G."/>
            <person name="Bulyk M.L."/>
            <person name="Harlow E."/>
            <person name="Marsischky G."/>
            <person name="Kolodner R.D."/>
            <person name="LaBaer J."/>
        </authorList>
    </citation>
    <scope>NUCLEOTIDE SEQUENCE [GENOMIC DNA]</scope>
    <source>
        <strain>ATCC 204508 / S288c</strain>
    </source>
</reference>
<proteinExistence type="predicted"/>
<dbReference type="EMBL" id="Z49302">
    <property type="protein sequence ID" value="CAA89318.1"/>
    <property type="molecule type" value="Genomic_DNA"/>
</dbReference>
<dbReference type="EMBL" id="AY558246">
    <property type="protein sequence ID" value="AAS56572.1"/>
    <property type="molecule type" value="Genomic_DNA"/>
</dbReference>
<dbReference type="EMBL" id="BK006943">
    <property type="protein sequence ID" value="DAA08771.1"/>
    <property type="molecule type" value="Genomic_DNA"/>
</dbReference>
<dbReference type="PIR" id="S56799">
    <property type="entry name" value="S56799"/>
</dbReference>
<dbReference type="RefSeq" id="NP_012507.3">
    <property type="nucleotide sequence ID" value="NM_001181461.3"/>
</dbReference>
<dbReference type="BioGRID" id="33732">
    <property type="interactions" value="25"/>
</dbReference>
<dbReference type="FunCoup" id="P47063">
    <property type="interactions" value="35"/>
</dbReference>
<dbReference type="STRING" id="4932.YJL027C"/>
<dbReference type="PaxDb" id="4932-YJL027C"/>
<dbReference type="TopDownProteomics" id="P47063"/>
<dbReference type="EnsemblFungi" id="YJL027C_mRNA">
    <property type="protein sequence ID" value="YJL027C"/>
    <property type="gene ID" value="YJL027C"/>
</dbReference>
<dbReference type="GeneID" id="853426"/>
<dbReference type="KEGG" id="sce:YJL027C"/>
<dbReference type="AGR" id="SGD:S000003564"/>
<dbReference type="SGD" id="S000003564">
    <property type="gene designation" value="YJL027C"/>
</dbReference>
<dbReference type="VEuPathDB" id="FungiDB:YJL027C"/>
<dbReference type="HOGENOM" id="CLU_1856436_0_0_1"/>
<dbReference type="InParanoid" id="P47063"/>
<dbReference type="OrthoDB" id="10268572at2759"/>
<dbReference type="BioCyc" id="YEAST:G3O-31496-MONOMER"/>
<dbReference type="PRO" id="PR:P47063"/>
<dbReference type="Proteomes" id="UP000002311">
    <property type="component" value="Chromosome X"/>
</dbReference>
<dbReference type="RNAct" id="P47063">
    <property type="molecule type" value="protein"/>
</dbReference>
<organism>
    <name type="scientific">Saccharomyces cerevisiae (strain ATCC 204508 / S288c)</name>
    <name type="common">Baker's yeast</name>
    <dbReference type="NCBI Taxonomy" id="559292"/>
    <lineage>
        <taxon>Eukaryota</taxon>
        <taxon>Fungi</taxon>
        <taxon>Dikarya</taxon>
        <taxon>Ascomycota</taxon>
        <taxon>Saccharomycotina</taxon>
        <taxon>Saccharomycetes</taxon>
        <taxon>Saccharomycetales</taxon>
        <taxon>Saccharomycetaceae</taxon>
        <taxon>Saccharomyces</taxon>
    </lineage>
</organism>
<accession>P47063</accession>
<accession>D6VWF5</accession>